<gene>
    <name type="primary">Mri1</name>
</gene>
<sequence length="369" mass="39411">MTLEAIRYSPGSLQILDQLQLPEHCHYEALSSVQQASEAIRAMKVRGAPAIALVGCLSLAVELRAGAGGPGLAALVAFVRDQLRLLVAARPTAVNMARAARDLGQVAAQEAEREGATEETVRERVIRFAEDMLEKDLKDNRSIGDLGARHLLEQTNPRGGKVTVLTHCNTGALATAGYGTALGVIRSLHEMGRLEHTFCTETRPYNQGARLTAFELVYEQIPATLITDSMAAAAMAHRGVSAVVVGADRVVANGDTANKIGTYQLAIVAKHHGVPFYVAAPSSSCDLHLETGKEIVIEERPSQELTDLNGVRIAAQGIRVWNPAFDVTPHELITGGIITELGVFAPEELRGALSASVFSEGQTLDSPWV</sequence>
<accession>Q9CQT1</accession>
<accession>Q8BXF6</accession>
<dbReference type="EC" id="5.3.1.23" evidence="3"/>
<dbReference type="EMBL" id="AK010538">
    <property type="protein sequence ID" value="BAB27014.1"/>
    <property type="molecule type" value="mRNA"/>
</dbReference>
<dbReference type="EMBL" id="AK013882">
    <property type="protein sequence ID" value="BAB29034.1"/>
    <property type="molecule type" value="mRNA"/>
</dbReference>
<dbReference type="EMBL" id="AK164894">
    <property type="protein sequence ID" value="BAE37957.1"/>
    <property type="molecule type" value="mRNA"/>
</dbReference>
<dbReference type="EMBL" id="AK047287">
    <property type="protein sequence ID" value="BAC33016.1"/>
    <property type="molecule type" value="mRNA"/>
</dbReference>
<dbReference type="EMBL" id="BC025049">
    <property type="protein sequence ID" value="AAH25049.1"/>
    <property type="molecule type" value="mRNA"/>
</dbReference>
<dbReference type="CCDS" id="CCDS22473.1"/>
<dbReference type="RefSeq" id="NP_080699.3">
    <property type="nucleotide sequence ID" value="NM_026423.4"/>
</dbReference>
<dbReference type="SMR" id="Q9CQT1"/>
<dbReference type="BioGRID" id="212500">
    <property type="interactions" value="3"/>
</dbReference>
<dbReference type="FunCoup" id="Q9CQT1">
    <property type="interactions" value="2646"/>
</dbReference>
<dbReference type="STRING" id="10090.ENSMUSP00000122623"/>
<dbReference type="GlyGen" id="Q9CQT1">
    <property type="glycosylation" value="1 site, 1 O-linked glycan (1 site)"/>
</dbReference>
<dbReference type="iPTMnet" id="Q9CQT1"/>
<dbReference type="PhosphoSitePlus" id="Q9CQT1"/>
<dbReference type="SwissPalm" id="Q9CQT1"/>
<dbReference type="jPOST" id="Q9CQT1"/>
<dbReference type="PaxDb" id="10090-ENSMUSP00000122623"/>
<dbReference type="PeptideAtlas" id="Q9CQT1"/>
<dbReference type="ProteomicsDB" id="290215"/>
<dbReference type="Pumba" id="Q9CQT1"/>
<dbReference type="Antibodypedia" id="26489">
    <property type="antibodies" value="231 antibodies from 25 providers"/>
</dbReference>
<dbReference type="Ensembl" id="ENSMUST00000126435.8">
    <property type="protein sequence ID" value="ENSMUSP00000122623.2"/>
    <property type="gene ID" value="ENSMUSG00000004996.10"/>
</dbReference>
<dbReference type="GeneID" id="67873"/>
<dbReference type="KEGG" id="mmu:67873"/>
<dbReference type="UCSC" id="uc009mmi.2">
    <property type="organism name" value="mouse"/>
</dbReference>
<dbReference type="AGR" id="MGI:1915123"/>
<dbReference type="CTD" id="84245"/>
<dbReference type="MGI" id="MGI:1915123">
    <property type="gene designation" value="Mri1"/>
</dbReference>
<dbReference type="VEuPathDB" id="HostDB:ENSMUSG00000004996"/>
<dbReference type="eggNOG" id="KOG1468">
    <property type="taxonomic scope" value="Eukaryota"/>
</dbReference>
<dbReference type="GeneTree" id="ENSGT00390000013732"/>
<dbReference type="HOGENOM" id="CLU_016218_1_3_1"/>
<dbReference type="InParanoid" id="Q9CQT1"/>
<dbReference type="OMA" id="CETRPLN"/>
<dbReference type="OrthoDB" id="2461at2759"/>
<dbReference type="PhylomeDB" id="Q9CQT1"/>
<dbReference type="TreeFam" id="TF300852"/>
<dbReference type="Reactome" id="R-MMU-1237112">
    <property type="pathway name" value="Methionine salvage pathway"/>
</dbReference>
<dbReference type="UniPathway" id="UPA00904">
    <property type="reaction ID" value="UER00874"/>
</dbReference>
<dbReference type="BioGRID-ORCS" id="67873">
    <property type="hits" value="0 hits in 78 CRISPR screens"/>
</dbReference>
<dbReference type="ChiTaRS" id="Mri1">
    <property type="organism name" value="mouse"/>
</dbReference>
<dbReference type="PRO" id="PR:Q9CQT1"/>
<dbReference type="Proteomes" id="UP000000589">
    <property type="component" value="Chromosome 8"/>
</dbReference>
<dbReference type="RNAct" id="Q9CQT1">
    <property type="molecule type" value="protein"/>
</dbReference>
<dbReference type="Bgee" id="ENSMUSG00000004996">
    <property type="expression patterns" value="Expressed in right kidney and 232 other cell types or tissues"/>
</dbReference>
<dbReference type="ExpressionAtlas" id="Q9CQT1">
    <property type="expression patterns" value="baseline and differential"/>
</dbReference>
<dbReference type="GO" id="GO:0005829">
    <property type="term" value="C:cytosol"/>
    <property type="evidence" value="ECO:0007669"/>
    <property type="project" value="Ensembl"/>
</dbReference>
<dbReference type="GO" id="GO:0001650">
    <property type="term" value="C:fibrillar center"/>
    <property type="evidence" value="ECO:0007669"/>
    <property type="project" value="Ensembl"/>
</dbReference>
<dbReference type="GO" id="GO:0005654">
    <property type="term" value="C:nucleoplasm"/>
    <property type="evidence" value="ECO:0007669"/>
    <property type="project" value="Ensembl"/>
</dbReference>
<dbReference type="GO" id="GO:0042802">
    <property type="term" value="F:identical protein binding"/>
    <property type="evidence" value="ECO:0007669"/>
    <property type="project" value="Ensembl"/>
</dbReference>
<dbReference type="GO" id="GO:0046523">
    <property type="term" value="F:S-methyl-5-thioribose-1-phosphate isomerase activity"/>
    <property type="evidence" value="ECO:0007669"/>
    <property type="project" value="UniProtKB-UniRule"/>
</dbReference>
<dbReference type="GO" id="GO:0019509">
    <property type="term" value="P:L-methionine salvage from methylthioadenosine"/>
    <property type="evidence" value="ECO:0007669"/>
    <property type="project" value="UniProtKB-UniRule"/>
</dbReference>
<dbReference type="FunFam" id="1.20.120.420:FF:000003">
    <property type="entry name" value="Methylthioribose-1-phosphate isomerase"/>
    <property type="match status" value="1"/>
</dbReference>
<dbReference type="FunFam" id="3.40.50.10470:FF:000003">
    <property type="entry name" value="Methylthioribose-1-phosphate isomerase"/>
    <property type="match status" value="1"/>
</dbReference>
<dbReference type="Gene3D" id="1.20.120.420">
    <property type="entry name" value="translation initiation factor eif-2b, domain 1"/>
    <property type="match status" value="1"/>
</dbReference>
<dbReference type="Gene3D" id="3.40.50.10470">
    <property type="entry name" value="Translation initiation factor eif-2b, domain 2"/>
    <property type="match status" value="1"/>
</dbReference>
<dbReference type="HAMAP" id="MF_01678">
    <property type="entry name" value="Salvage_MtnA"/>
    <property type="match status" value="1"/>
</dbReference>
<dbReference type="InterPro" id="IPR000649">
    <property type="entry name" value="IF-2B-related"/>
</dbReference>
<dbReference type="InterPro" id="IPR005251">
    <property type="entry name" value="IF-M1Pi"/>
</dbReference>
<dbReference type="InterPro" id="IPR042529">
    <property type="entry name" value="IF_2B-like_C"/>
</dbReference>
<dbReference type="InterPro" id="IPR011559">
    <property type="entry name" value="Initiation_fac_2B_a/b/d"/>
</dbReference>
<dbReference type="InterPro" id="IPR027363">
    <property type="entry name" value="M1Pi_N"/>
</dbReference>
<dbReference type="InterPro" id="IPR037171">
    <property type="entry name" value="NagB/RpiA_transferase-like"/>
</dbReference>
<dbReference type="NCBIfam" id="TIGR00524">
    <property type="entry name" value="eIF-2B_rel"/>
    <property type="match status" value="1"/>
</dbReference>
<dbReference type="NCBIfam" id="NF004326">
    <property type="entry name" value="PRK05720.1"/>
    <property type="match status" value="1"/>
</dbReference>
<dbReference type="NCBIfam" id="TIGR00512">
    <property type="entry name" value="salvage_mtnA"/>
    <property type="match status" value="1"/>
</dbReference>
<dbReference type="PANTHER" id="PTHR43475">
    <property type="entry name" value="METHYLTHIORIBOSE-1-PHOSPHATE ISOMERASE"/>
    <property type="match status" value="1"/>
</dbReference>
<dbReference type="PANTHER" id="PTHR43475:SF1">
    <property type="entry name" value="METHYLTHIORIBOSE-1-PHOSPHATE ISOMERASE"/>
    <property type="match status" value="1"/>
</dbReference>
<dbReference type="Pfam" id="PF01008">
    <property type="entry name" value="IF-2B"/>
    <property type="match status" value="1"/>
</dbReference>
<dbReference type="SUPFAM" id="SSF100950">
    <property type="entry name" value="NagB/RpiA/CoA transferase-like"/>
    <property type="match status" value="1"/>
</dbReference>
<protein>
    <recommendedName>
        <fullName evidence="3">Methylthioribose-1-phosphate isomerase</fullName>
        <shortName evidence="3">M1Pi</shortName>
        <shortName evidence="3">MTR-1-P isomerase</shortName>
        <ecNumber evidence="3">5.3.1.23</ecNumber>
    </recommendedName>
    <alternativeName>
        <fullName evidence="3">S-methyl-5-thioribose-1-phosphate isomerase</fullName>
    </alternativeName>
    <alternativeName>
        <fullName evidence="3">Translation initiation factor eIF-2B subunit alpha/beta/delta-like protein</fullName>
    </alternativeName>
</protein>
<proteinExistence type="evidence at protein level"/>
<name>MTNA_MOUSE</name>
<organism>
    <name type="scientific">Mus musculus</name>
    <name type="common">Mouse</name>
    <dbReference type="NCBI Taxonomy" id="10090"/>
    <lineage>
        <taxon>Eukaryota</taxon>
        <taxon>Metazoa</taxon>
        <taxon>Chordata</taxon>
        <taxon>Craniata</taxon>
        <taxon>Vertebrata</taxon>
        <taxon>Euteleostomi</taxon>
        <taxon>Mammalia</taxon>
        <taxon>Eutheria</taxon>
        <taxon>Euarchontoglires</taxon>
        <taxon>Glires</taxon>
        <taxon>Rodentia</taxon>
        <taxon>Myomorpha</taxon>
        <taxon>Muroidea</taxon>
        <taxon>Muridae</taxon>
        <taxon>Murinae</taxon>
        <taxon>Mus</taxon>
        <taxon>Mus</taxon>
    </lineage>
</organism>
<reference key="1">
    <citation type="journal article" date="2005" name="Science">
        <title>The transcriptional landscape of the mammalian genome.</title>
        <authorList>
            <person name="Carninci P."/>
            <person name="Kasukawa T."/>
            <person name="Katayama S."/>
            <person name="Gough J."/>
            <person name="Frith M.C."/>
            <person name="Maeda N."/>
            <person name="Oyama R."/>
            <person name="Ravasi T."/>
            <person name="Lenhard B."/>
            <person name="Wells C."/>
            <person name="Kodzius R."/>
            <person name="Shimokawa K."/>
            <person name="Bajic V.B."/>
            <person name="Brenner S.E."/>
            <person name="Batalov S."/>
            <person name="Forrest A.R."/>
            <person name="Zavolan M."/>
            <person name="Davis M.J."/>
            <person name="Wilming L.G."/>
            <person name="Aidinis V."/>
            <person name="Allen J.E."/>
            <person name="Ambesi-Impiombato A."/>
            <person name="Apweiler R."/>
            <person name="Aturaliya R.N."/>
            <person name="Bailey T.L."/>
            <person name="Bansal M."/>
            <person name="Baxter L."/>
            <person name="Beisel K.W."/>
            <person name="Bersano T."/>
            <person name="Bono H."/>
            <person name="Chalk A.M."/>
            <person name="Chiu K.P."/>
            <person name="Choudhary V."/>
            <person name="Christoffels A."/>
            <person name="Clutterbuck D.R."/>
            <person name="Crowe M.L."/>
            <person name="Dalla E."/>
            <person name="Dalrymple B.P."/>
            <person name="de Bono B."/>
            <person name="Della Gatta G."/>
            <person name="di Bernardo D."/>
            <person name="Down T."/>
            <person name="Engstrom P."/>
            <person name="Fagiolini M."/>
            <person name="Faulkner G."/>
            <person name="Fletcher C.F."/>
            <person name="Fukushima T."/>
            <person name="Furuno M."/>
            <person name="Futaki S."/>
            <person name="Gariboldi M."/>
            <person name="Georgii-Hemming P."/>
            <person name="Gingeras T.R."/>
            <person name="Gojobori T."/>
            <person name="Green R.E."/>
            <person name="Gustincich S."/>
            <person name="Harbers M."/>
            <person name="Hayashi Y."/>
            <person name="Hensch T.K."/>
            <person name="Hirokawa N."/>
            <person name="Hill D."/>
            <person name="Huminiecki L."/>
            <person name="Iacono M."/>
            <person name="Ikeo K."/>
            <person name="Iwama A."/>
            <person name="Ishikawa T."/>
            <person name="Jakt M."/>
            <person name="Kanapin A."/>
            <person name="Katoh M."/>
            <person name="Kawasawa Y."/>
            <person name="Kelso J."/>
            <person name="Kitamura H."/>
            <person name="Kitano H."/>
            <person name="Kollias G."/>
            <person name="Krishnan S.P."/>
            <person name="Kruger A."/>
            <person name="Kummerfeld S.K."/>
            <person name="Kurochkin I.V."/>
            <person name="Lareau L.F."/>
            <person name="Lazarevic D."/>
            <person name="Lipovich L."/>
            <person name="Liu J."/>
            <person name="Liuni S."/>
            <person name="McWilliam S."/>
            <person name="Madan Babu M."/>
            <person name="Madera M."/>
            <person name="Marchionni L."/>
            <person name="Matsuda H."/>
            <person name="Matsuzawa S."/>
            <person name="Miki H."/>
            <person name="Mignone F."/>
            <person name="Miyake S."/>
            <person name="Morris K."/>
            <person name="Mottagui-Tabar S."/>
            <person name="Mulder N."/>
            <person name="Nakano N."/>
            <person name="Nakauchi H."/>
            <person name="Ng P."/>
            <person name="Nilsson R."/>
            <person name="Nishiguchi S."/>
            <person name="Nishikawa S."/>
            <person name="Nori F."/>
            <person name="Ohara O."/>
            <person name="Okazaki Y."/>
            <person name="Orlando V."/>
            <person name="Pang K.C."/>
            <person name="Pavan W.J."/>
            <person name="Pavesi G."/>
            <person name="Pesole G."/>
            <person name="Petrovsky N."/>
            <person name="Piazza S."/>
            <person name="Reed J."/>
            <person name="Reid J.F."/>
            <person name="Ring B.Z."/>
            <person name="Ringwald M."/>
            <person name="Rost B."/>
            <person name="Ruan Y."/>
            <person name="Salzberg S.L."/>
            <person name="Sandelin A."/>
            <person name="Schneider C."/>
            <person name="Schoenbach C."/>
            <person name="Sekiguchi K."/>
            <person name="Semple C.A."/>
            <person name="Seno S."/>
            <person name="Sessa L."/>
            <person name="Sheng Y."/>
            <person name="Shibata Y."/>
            <person name="Shimada H."/>
            <person name="Shimada K."/>
            <person name="Silva D."/>
            <person name="Sinclair B."/>
            <person name="Sperling S."/>
            <person name="Stupka E."/>
            <person name="Sugiura K."/>
            <person name="Sultana R."/>
            <person name="Takenaka Y."/>
            <person name="Taki K."/>
            <person name="Tammoja K."/>
            <person name="Tan S.L."/>
            <person name="Tang S."/>
            <person name="Taylor M.S."/>
            <person name="Tegner J."/>
            <person name="Teichmann S.A."/>
            <person name="Ueda H.R."/>
            <person name="van Nimwegen E."/>
            <person name="Verardo R."/>
            <person name="Wei C.L."/>
            <person name="Yagi K."/>
            <person name="Yamanishi H."/>
            <person name="Zabarovsky E."/>
            <person name="Zhu S."/>
            <person name="Zimmer A."/>
            <person name="Hide W."/>
            <person name="Bult C."/>
            <person name="Grimmond S.M."/>
            <person name="Teasdale R.D."/>
            <person name="Liu E.T."/>
            <person name="Brusic V."/>
            <person name="Quackenbush J."/>
            <person name="Wahlestedt C."/>
            <person name="Mattick J.S."/>
            <person name="Hume D.A."/>
            <person name="Kai C."/>
            <person name="Sasaki D."/>
            <person name="Tomaru Y."/>
            <person name="Fukuda S."/>
            <person name="Kanamori-Katayama M."/>
            <person name="Suzuki M."/>
            <person name="Aoki J."/>
            <person name="Arakawa T."/>
            <person name="Iida J."/>
            <person name="Imamura K."/>
            <person name="Itoh M."/>
            <person name="Kato T."/>
            <person name="Kawaji H."/>
            <person name="Kawagashira N."/>
            <person name="Kawashima T."/>
            <person name="Kojima M."/>
            <person name="Kondo S."/>
            <person name="Konno H."/>
            <person name="Nakano K."/>
            <person name="Ninomiya N."/>
            <person name="Nishio T."/>
            <person name="Okada M."/>
            <person name="Plessy C."/>
            <person name="Shibata K."/>
            <person name="Shiraki T."/>
            <person name="Suzuki S."/>
            <person name="Tagami M."/>
            <person name="Waki K."/>
            <person name="Watahiki A."/>
            <person name="Okamura-Oho Y."/>
            <person name="Suzuki H."/>
            <person name="Kawai J."/>
            <person name="Hayashizaki Y."/>
        </authorList>
    </citation>
    <scope>NUCLEOTIDE SEQUENCE [LARGE SCALE MRNA]</scope>
    <source>
        <strain>C57BL/6J</strain>
        <tissue>Cerebellum</tissue>
        <tissue>Head</tissue>
        <tissue>Lung</tissue>
    </source>
</reference>
<reference key="2">
    <citation type="journal article" date="2004" name="Genome Res.">
        <title>The status, quality, and expansion of the NIH full-length cDNA project: the Mammalian Gene Collection (MGC).</title>
        <authorList>
            <consortium name="The MGC Project Team"/>
        </authorList>
    </citation>
    <scope>NUCLEOTIDE SEQUENCE [LARGE SCALE MRNA]</scope>
    <source>
        <strain>FVB/N</strain>
        <tissue>Mammary tumor</tissue>
    </source>
</reference>
<reference key="3">
    <citation type="journal article" date="2010" name="Cell">
        <title>A tissue-specific atlas of mouse protein phosphorylation and expression.</title>
        <authorList>
            <person name="Huttlin E.L."/>
            <person name="Jedrychowski M.P."/>
            <person name="Elias J.E."/>
            <person name="Goswami T."/>
            <person name="Rad R."/>
            <person name="Beausoleil S.A."/>
            <person name="Villen J."/>
            <person name="Haas W."/>
            <person name="Sowa M.E."/>
            <person name="Gygi S.P."/>
        </authorList>
    </citation>
    <scope>IDENTIFICATION BY MASS SPECTROMETRY [LARGE SCALE ANALYSIS]</scope>
    <source>
        <tissue>Brain</tissue>
        <tissue>Heart</tissue>
        <tissue>Kidney</tissue>
        <tissue>Liver</tissue>
        <tissue>Lung</tissue>
        <tissue>Pancreas</tissue>
        <tissue>Spleen</tissue>
        <tissue>Testis</tissue>
    </source>
</reference>
<reference key="4">
    <citation type="journal article" date="2014" name="Mol. Cell. Proteomics">
        <title>Immunoaffinity enrichment and mass spectrometry analysis of protein methylation.</title>
        <authorList>
            <person name="Guo A."/>
            <person name="Gu H."/>
            <person name="Zhou J."/>
            <person name="Mulhern D."/>
            <person name="Wang Y."/>
            <person name="Lee K.A."/>
            <person name="Yang V."/>
            <person name="Aguiar M."/>
            <person name="Kornhauser J."/>
            <person name="Jia X."/>
            <person name="Ren J."/>
            <person name="Beausoleil S.A."/>
            <person name="Silva J.C."/>
            <person name="Vemulapalli V."/>
            <person name="Bedford M.T."/>
            <person name="Comb M.J."/>
        </authorList>
    </citation>
    <scope>METHYLATION [LARGE SCALE ANALYSIS] AT ARG-158</scope>
    <scope>IDENTIFICATION BY MASS SPECTROMETRY [LARGE SCALE ANALYSIS]</scope>
    <source>
        <tissue>Brain</tissue>
    </source>
</reference>
<evidence type="ECO:0000250" key="1">
    <source>
        <dbReference type="UniProtKB" id="Q5HZE4"/>
    </source>
</evidence>
<evidence type="ECO:0000250" key="2">
    <source>
        <dbReference type="UniProtKB" id="Q9BV20"/>
    </source>
</evidence>
<evidence type="ECO:0000255" key="3">
    <source>
        <dbReference type="HAMAP-Rule" id="MF_03119"/>
    </source>
</evidence>
<evidence type="ECO:0000305" key="4"/>
<evidence type="ECO:0007744" key="5">
    <source>
    </source>
</evidence>
<keyword id="KW-0007">Acetylation</keyword>
<keyword id="KW-0028">Amino-acid biosynthesis</keyword>
<keyword id="KW-0963">Cytoplasm</keyword>
<keyword id="KW-0413">Isomerase</keyword>
<keyword id="KW-0486">Methionine biosynthesis</keyword>
<keyword id="KW-0488">Methylation</keyword>
<keyword id="KW-0539">Nucleus</keyword>
<keyword id="KW-0597">Phosphoprotein</keyword>
<keyword id="KW-1185">Reference proteome</keyword>
<comment type="function">
    <text evidence="3">Catalyzes the interconversion of methylthioribose-1-phosphate (MTR-1-P) into methylthioribulose-1-phosphate (MTRu-1-P).</text>
</comment>
<comment type="catalytic activity">
    <reaction evidence="3">
        <text>5-(methylsulfanyl)-alpha-D-ribose 1-phosphate = 5-(methylsulfanyl)-D-ribulose 1-phosphate</text>
        <dbReference type="Rhea" id="RHEA:19989"/>
        <dbReference type="ChEBI" id="CHEBI:58533"/>
        <dbReference type="ChEBI" id="CHEBI:58548"/>
        <dbReference type="EC" id="5.3.1.23"/>
    </reaction>
</comment>
<comment type="pathway">
    <text evidence="3">Amino-acid biosynthesis; L-methionine biosynthesis via salvage pathway; L-methionine from S-methyl-5-thio-alpha-D-ribose 1-phosphate: step 1/6.</text>
</comment>
<comment type="subcellular location">
    <subcellularLocation>
        <location evidence="3">Cytoplasm</location>
    </subcellularLocation>
    <subcellularLocation>
        <location evidence="3">Nucleus</location>
    </subcellularLocation>
</comment>
<comment type="similarity">
    <text evidence="3">Belongs to the eIF-2B alpha/beta/delta subunits family. MtnA subfamily.</text>
</comment>
<feature type="chain" id="PRO_0000317326" description="Methylthioribose-1-phosphate isomerase">
    <location>
        <begin position="1"/>
        <end position="369"/>
    </location>
</feature>
<feature type="active site" description="Proton donor" evidence="3">
    <location>
        <position position="248"/>
    </location>
</feature>
<feature type="site" description="Transition state stabilizer" evidence="3">
    <location>
        <position position="168"/>
    </location>
</feature>
<feature type="modified residue" description="N-acetylmethionine" evidence="2">
    <location>
        <position position="1"/>
    </location>
</feature>
<feature type="modified residue" description="Omega-N-methylarginine" evidence="5">
    <location>
        <position position="158"/>
    </location>
</feature>
<feature type="modified residue" description="Phosphoserine" evidence="1">
    <location>
        <position position="366"/>
    </location>
</feature>
<feature type="sequence conflict" description="In Ref. 1; BAC33016." evidence="4" ref="1">
    <original>C</original>
    <variation>L</variation>
    <location>
        <position position="168"/>
    </location>
</feature>
<feature type="sequence conflict" description="In Ref. 1; BAC33016." evidence="4" ref="1">
    <original>E</original>
    <variation>D</variation>
    <location>
        <position position="190"/>
    </location>
</feature>
<feature type="sequence conflict" description="In Ref. 1; BAC33016." evidence="4" ref="1">
    <original>R</original>
    <variation>Q</variation>
    <location>
        <position position="238"/>
    </location>
</feature>
<feature type="sequence conflict" description="In Ref. 1; BAC33016." evidence="4" ref="1">
    <original>T</original>
    <variation>S</variation>
    <location>
        <position position="291"/>
    </location>
</feature>